<name>PATE2_MOUSE</name>
<dbReference type="EMBL" id="AK136651">
    <property type="protein sequence ID" value="BAE23088.1"/>
    <property type="molecule type" value="mRNA"/>
</dbReference>
<dbReference type="EMBL" id="AK144787">
    <property type="protein sequence ID" value="BAE26067.1"/>
    <property type="molecule type" value="mRNA"/>
</dbReference>
<dbReference type="CCDS" id="CCDS52756.1">
    <molecule id="Q3UW31-1"/>
</dbReference>
<dbReference type="RefSeq" id="NP_001028593.1">
    <molecule id="Q3UW31-1"/>
    <property type="nucleotide sequence ID" value="NM_001033421.3"/>
</dbReference>
<dbReference type="RefSeq" id="XP_011240865.1">
    <property type="nucleotide sequence ID" value="XM_011242563.2"/>
</dbReference>
<dbReference type="SMR" id="Q3UW31"/>
<dbReference type="FunCoup" id="Q3UW31">
    <property type="interactions" value="614"/>
</dbReference>
<dbReference type="STRING" id="10090.ENSMUSP00000113239"/>
<dbReference type="PhosphoSitePlus" id="Q3UW31"/>
<dbReference type="PaxDb" id="10090-ENSMUSP00000113239"/>
<dbReference type="ProteomicsDB" id="287886">
    <molecule id="Q3UW31-1"/>
</dbReference>
<dbReference type="ProteomicsDB" id="287887">
    <molecule id="Q3UW31-2"/>
</dbReference>
<dbReference type="Ensembl" id="ENSMUST00000118254.2">
    <molecule id="Q3UW31-1"/>
    <property type="protein sequence ID" value="ENSMUSP00000113239.2"/>
    <property type="gene ID" value="ENSMUSG00000074452.14"/>
</dbReference>
<dbReference type="GeneID" id="330921"/>
<dbReference type="KEGG" id="mmu:330921"/>
<dbReference type="UCSC" id="uc009otl.1">
    <molecule id="Q3UW31-1"/>
    <property type="organism name" value="mouse"/>
</dbReference>
<dbReference type="AGR" id="MGI:2685692"/>
<dbReference type="CTD" id="399967"/>
<dbReference type="MGI" id="MGI:2685692">
    <property type="gene designation" value="Pate2"/>
</dbReference>
<dbReference type="VEuPathDB" id="HostDB:ENSMUSG00000074452"/>
<dbReference type="eggNOG" id="ENOG502TEE7">
    <property type="taxonomic scope" value="Eukaryota"/>
</dbReference>
<dbReference type="GeneTree" id="ENSGT00510000048956"/>
<dbReference type="HOGENOM" id="CLU_171487_1_0_1"/>
<dbReference type="InParanoid" id="Q3UW31"/>
<dbReference type="OMA" id="LKHKQSC"/>
<dbReference type="OrthoDB" id="68122at9989"/>
<dbReference type="BioGRID-ORCS" id="330921">
    <property type="hits" value="2 hits in 76 CRISPR screens"/>
</dbReference>
<dbReference type="ChiTaRS" id="Pate2">
    <property type="organism name" value="mouse"/>
</dbReference>
<dbReference type="PRO" id="PR:Q3UW31"/>
<dbReference type="Proteomes" id="UP000000589">
    <property type="component" value="Chromosome 9"/>
</dbReference>
<dbReference type="RNAct" id="Q3UW31">
    <property type="molecule type" value="protein"/>
</dbReference>
<dbReference type="Bgee" id="ENSMUSG00000074452">
    <property type="expression patterns" value="Expressed in primary oocyte and 40 other cell types or tissues"/>
</dbReference>
<dbReference type="ExpressionAtlas" id="Q3UW31">
    <property type="expression patterns" value="baseline and differential"/>
</dbReference>
<dbReference type="GO" id="GO:0005615">
    <property type="term" value="C:extracellular space"/>
    <property type="evidence" value="ECO:0000266"/>
    <property type="project" value="MGI"/>
</dbReference>
<dbReference type="CDD" id="cd23578">
    <property type="entry name" value="TFP_LU_ECD_PATE2"/>
    <property type="match status" value="1"/>
</dbReference>
<dbReference type="InterPro" id="IPR016054">
    <property type="entry name" value="LY6_UPA_recep-like"/>
</dbReference>
<dbReference type="InterPro" id="IPR029691">
    <property type="entry name" value="PATE2"/>
</dbReference>
<dbReference type="PANTHER" id="PTHR47884">
    <property type="entry name" value="PROSTATE AND TESTIS EXPRESSED PROTEIN 2"/>
    <property type="match status" value="1"/>
</dbReference>
<dbReference type="PANTHER" id="PTHR47884:SF1">
    <property type="entry name" value="PROSTATE AND TESTIS EXPRESSED PROTEIN 2"/>
    <property type="match status" value="1"/>
</dbReference>
<dbReference type="Pfam" id="PF00021">
    <property type="entry name" value="UPAR_LY6"/>
    <property type="match status" value="1"/>
</dbReference>
<accession>Q3UW31</accession>
<accession>Q3UMN1</accession>
<proteinExistence type="evidence at transcript level"/>
<keyword id="KW-0025">Alternative splicing</keyword>
<keyword id="KW-1015">Disulfide bond</keyword>
<keyword id="KW-1185">Reference proteome</keyword>
<keyword id="KW-0964">Secreted</keyword>
<keyword id="KW-0732">Signal</keyword>
<comment type="subcellular location">
    <subcellularLocation>
        <location evidence="4">Secreted</location>
    </subcellularLocation>
</comment>
<comment type="alternative products">
    <event type="alternative splicing"/>
    <isoform>
        <id>Q3UW31-1</id>
        <name>1</name>
        <sequence type="displayed"/>
    </isoform>
    <isoform>
        <id>Q3UW31-2</id>
        <name>2</name>
        <sequence type="described" ref="VSP_021874"/>
    </isoform>
</comment>
<comment type="tissue specificity">
    <text evidence="2">Expressed in prostate, testis, brain and lung.</text>
</comment>
<comment type="similarity">
    <text evidence="4">Belongs to the PATE family.</text>
</comment>
<protein>
    <recommendedName>
        <fullName>Prostate and testis expressed protein 2</fullName>
    </recommendedName>
    <alternativeName>
        <fullName>PATE-like protein M</fullName>
        <shortName>PATE-M</shortName>
    </alternativeName>
</protein>
<gene>
    <name type="primary">Pate2</name>
    <name type="synonym">Gm846</name>
</gene>
<evidence type="ECO:0000255" key="1"/>
<evidence type="ECO:0000269" key="2">
    <source>
    </source>
</evidence>
<evidence type="ECO:0000303" key="3">
    <source>
    </source>
</evidence>
<evidence type="ECO:0000305" key="4"/>
<organism>
    <name type="scientific">Mus musculus</name>
    <name type="common">Mouse</name>
    <dbReference type="NCBI Taxonomy" id="10090"/>
    <lineage>
        <taxon>Eukaryota</taxon>
        <taxon>Metazoa</taxon>
        <taxon>Chordata</taxon>
        <taxon>Craniata</taxon>
        <taxon>Vertebrata</taxon>
        <taxon>Euteleostomi</taxon>
        <taxon>Mammalia</taxon>
        <taxon>Eutheria</taxon>
        <taxon>Euarchontoglires</taxon>
        <taxon>Glires</taxon>
        <taxon>Rodentia</taxon>
        <taxon>Myomorpha</taxon>
        <taxon>Muroidea</taxon>
        <taxon>Muridae</taxon>
        <taxon>Murinae</taxon>
        <taxon>Mus</taxon>
        <taxon>Mus</taxon>
    </lineage>
</organism>
<sequence>MFVLVMICLFCQYWGVLNELEEEDRGLLCYKCKKYHLGLCYGIMTSCVPNHRQTCAAENFYILTKKGQSMYHYSRLSCMTNCEDINFLSFERRTELICCKHSNYCNLPMGL</sequence>
<reference key="1">
    <citation type="journal article" date="2005" name="Science">
        <title>The transcriptional landscape of the mammalian genome.</title>
        <authorList>
            <person name="Carninci P."/>
            <person name="Kasukawa T."/>
            <person name="Katayama S."/>
            <person name="Gough J."/>
            <person name="Frith M.C."/>
            <person name="Maeda N."/>
            <person name="Oyama R."/>
            <person name="Ravasi T."/>
            <person name="Lenhard B."/>
            <person name="Wells C."/>
            <person name="Kodzius R."/>
            <person name="Shimokawa K."/>
            <person name="Bajic V.B."/>
            <person name="Brenner S.E."/>
            <person name="Batalov S."/>
            <person name="Forrest A.R."/>
            <person name="Zavolan M."/>
            <person name="Davis M.J."/>
            <person name="Wilming L.G."/>
            <person name="Aidinis V."/>
            <person name="Allen J.E."/>
            <person name="Ambesi-Impiombato A."/>
            <person name="Apweiler R."/>
            <person name="Aturaliya R.N."/>
            <person name="Bailey T.L."/>
            <person name="Bansal M."/>
            <person name="Baxter L."/>
            <person name="Beisel K.W."/>
            <person name="Bersano T."/>
            <person name="Bono H."/>
            <person name="Chalk A.M."/>
            <person name="Chiu K.P."/>
            <person name="Choudhary V."/>
            <person name="Christoffels A."/>
            <person name="Clutterbuck D.R."/>
            <person name="Crowe M.L."/>
            <person name="Dalla E."/>
            <person name="Dalrymple B.P."/>
            <person name="de Bono B."/>
            <person name="Della Gatta G."/>
            <person name="di Bernardo D."/>
            <person name="Down T."/>
            <person name="Engstrom P."/>
            <person name="Fagiolini M."/>
            <person name="Faulkner G."/>
            <person name="Fletcher C.F."/>
            <person name="Fukushima T."/>
            <person name="Furuno M."/>
            <person name="Futaki S."/>
            <person name="Gariboldi M."/>
            <person name="Georgii-Hemming P."/>
            <person name="Gingeras T.R."/>
            <person name="Gojobori T."/>
            <person name="Green R.E."/>
            <person name="Gustincich S."/>
            <person name="Harbers M."/>
            <person name="Hayashi Y."/>
            <person name="Hensch T.K."/>
            <person name="Hirokawa N."/>
            <person name="Hill D."/>
            <person name="Huminiecki L."/>
            <person name="Iacono M."/>
            <person name="Ikeo K."/>
            <person name="Iwama A."/>
            <person name="Ishikawa T."/>
            <person name="Jakt M."/>
            <person name="Kanapin A."/>
            <person name="Katoh M."/>
            <person name="Kawasawa Y."/>
            <person name="Kelso J."/>
            <person name="Kitamura H."/>
            <person name="Kitano H."/>
            <person name="Kollias G."/>
            <person name="Krishnan S.P."/>
            <person name="Kruger A."/>
            <person name="Kummerfeld S.K."/>
            <person name="Kurochkin I.V."/>
            <person name="Lareau L.F."/>
            <person name="Lazarevic D."/>
            <person name="Lipovich L."/>
            <person name="Liu J."/>
            <person name="Liuni S."/>
            <person name="McWilliam S."/>
            <person name="Madan Babu M."/>
            <person name="Madera M."/>
            <person name="Marchionni L."/>
            <person name="Matsuda H."/>
            <person name="Matsuzawa S."/>
            <person name="Miki H."/>
            <person name="Mignone F."/>
            <person name="Miyake S."/>
            <person name="Morris K."/>
            <person name="Mottagui-Tabar S."/>
            <person name="Mulder N."/>
            <person name="Nakano N."/>
            <person name="Nakauchi H."/>
            <person name="Ng P."/>
            <person name="Nilsson R."/>
            <person name="Nishiguchi S."/>
            <person name="Nishikawa S."/>
            <person name="Nori F."/>
            <person name="Ohara O."/>
            <person name="Okazaki Y."/>
            <person name="Orlando V."/>
            <person name="Pang K.C."/>
            <person name="Pavan W.J."/>
            <person name="Pavesi G."/>
            <person name="Pesole G."/>
            <person name="Petrovsky N."/>
            <person name="Piazza S."/>
            <person name="Reed J."/>
            <person name="Reid J.F."/>
            <person name="Ring B.Z."/>
            <person name="Ringwald M."/>
            <person name="Rost B."/>
            <person name="Ruan Y."/>
            <person name="Salzberg S.L."/>
            <person name="Sandelin A."/>
            <person name="Schneider C."/>
            <person name="Schoenbach C."/>
            <person name="Sekiguchi K."/>
            <person name="Semple C.A."/>
            <person name="Seno S."/>
            <person name="Sessa L."/>
            <person name="Sheng Y."/>
            <person name="Shibata Y."/>
            <person name="Shimada H."/>
            <person name="Shimada K."/>
            <person name="Silva D."/>
            <person name="Sinclair B."/>
            <person name="Sperling S."/>
            <person name="Stupka E."/>
            <person name="Sugiura K."/>
            <person name="Sultana R."/>
            <person name="Takenaka Y."/>
            <person name="Taki K."/>
            <person name="Tammoja K."/>
            <person name="Tan S.L."/>
            <person name="Tang S."/>
            <person name="Taylor M.S."/>
            <person name="Tegner J."/>
            <person name="Teichmann S.A."/>
            <person name="Ueda H.R."/>
            <person name="van Nimwegen E."/>
            <person name="Verardo R."/>
            <person name="Wei C.L."/>
            <person name="Yagi K."/>
            <person name="Yamanishi H."/>
            <person name="Zabarovsky E."/>
            <person name="Zhu S."/>
            <person name="Zimmer A."/>
            <person name="Hide W."/>
            <person name="Bult C."/>
            <person name="Grimmond S.M."/>
            <person name="Teasdale R.D."/>
            <person name="Liu E.T."/>
            <person name="Brusic V."/>
            <person name="Quackenbush J."/>
            <person name="Wahlestedt C."/>
            <person name="Mattick J.S."/>
            <person name="Hume D.A."/>
            <person name="Kai C."/>
            <person name="Sasaki D."/>
            <person name="Tomaru Y."/>
            <person name="Fukuda S."/>
            <person name="Kanamori-Katayama M."/>
            <person name="Suzuki M."/>
            <person name="Aoki J."/>
            <person name="Arakawa T."/>
            <person name="Iida J."/>
            <person name="Imamura K."/>
            <person name="Itoh M."/>
            <person name="Kato T."/>
            <person name="Kawaji H."/>
            <person name="Kawagashira N."/>
            <person name="Kawashima T."/>
            <person name="Kojima M."/>
            <person name="Kondo S."/>
            <person name="Konno H."/>
            <person name="Nakano K."/>
            <person name="Ninomiya N."/>
            <person name="Nishio T."/>
            <person name="Okada M."/>
            <person name="Plessy C."/>
            <person name="Shibata K."/>
            <person name="Shiraki T."/>
            <person name="Suzuki S."/>
            <person name="Tagami M."/>
            <person name="Waki K."/>
            <person name="Watahiki A."/>
            <person name="Okamura-Oho Y."/>
            <person name="Suzuki H."/>
            <person name="Kawai J."/>
            <person name="Hayashizaki Y."/>
        </authorList>
    </citation>
    <scope>NUCLEOTIDE SEQUENCE [LARGE SCALE MRNA] (ISOFORMS 1 AND 2)</scope>
    <source>
        <strain>C57BL/6J</strain>
        <tissue>Epididymis</tissue>
        <tissue>Lung</tissue>
    </source>
</reference>
<reference key="2">
    <citation type="journal article" date="2008" name="J. Biol. Chem.">
        <title>PATE gene clusters code for multiple, secreted TFP/Ly-6/uPAR proteins that are expressed in reproductive and neuron-rich tissues and possess neuromodulatory activity.</title>
        <authorList>
            <person name="Levitin F."/>
            <person name="Weiss M."/>
            <person name="Hahn Y."/>
            <person name="Stern O."/>
            <person name="Papke R.L."/>
            <person name="Matusik R."/>
            <person name="Nandana S.R."/>
            <person name="Ziv R."/>
            <person name="Pichinuk E."/>
            <person name="Salame S."/>
            <person name="Bera T."/>
            <person name="Vincent J."/>
            <person name="Lee B."/>
            <person name="Pastan I."/>
            <person name="Wreschner D.H."/>
        </authorList>
    </citation>
    <scope>TISSUE SPECIFICITY</scope>
</reference>
<feature type="signal peptide" evidence="1">
    <location>
        <begin position="1"/>
        <end position="18"/>
    </location>
</feature>
<feature type="chain" id="PRO_0000263608" description="Prostate and testis expressed protein 2">
    <location>
        <begin position="19"/>
        <end position="111"/>
    </location>
</feature>
<feature type="domain" description="UPAR/Ly6" evidence="4">
    <location>
        <begin position="27"/>
        <end position="108"/>
    </location>
</feature>
<feature type="disulfide bond" evidence="1">
    <location>
        <begin position="29"/>
        <end position="55"/>
    </location>
</feature>
<feature type="disulfide bond" evidence="1">
    <location>
        <begin position="32"/>
        <end position="40"/>
    </location>
</feature>
<feature type="disulfide bond" evidence="1">
    <location>
        <begin position="47"/>
        <end position="78"/>
    </location>
</feature>
<feature type="disulfide bond" evidence="1">
    <location>
        <begin position="82"/>
        <end position="99"/>
    </location>
</feature>
<feature type="splice variant" id="VSP_021874" description="In isoform 2." evidence="3">
    <original>CCKHSNYCNLPMGL</original>
    <variation>FSWSHSCKTLGRYTEIGFHYQPAGLQRHHLEVTQRKLLKKQKEPLFNETFDE</variation>
    <location>
        <begin position="98"/>
        <end position="111"/>
    </location>
</feature>